<proteinExistence type="inferred from homology"/>
<organism>
    <name type="scientific">Prochlorococcus marinus (strain MIT 9515)</name>
    <dbReference type="NCBI Taxonomy" id="167542"/>
    <lineage>
        <taxon>Bacteria</taxon>
        <taxon>Bacillati</taxon>
        <taxon>Cyanobacteriota</taxon>
        <taxon>Cyanophyceae</taxon>
        <taxon>Synechococcales</taxon>
        <taxon>Prochlorococcaceae</taxon>
        <taxon>Prochlorococcus</taxon>
    </lineage>
</organism>
<accession>A2BZ16</accession>
<name>FLUC_PROM5</name>
<comment type="function">
    <text evidence="1">Fluoride-specific ion channel. Important for reducing fluoride concentration in the cell, thus reducing its toxicity.</text>
</comment>
<comment type="catalytic activity">
    <reaction evidence="1">
        <text>fluoride(in) = fluoride(out)</text>
        <dbReference type="Rhea" id="RHEA:76159"/>
        <dbReference type="ChEBI" id="CHEBI:17051"/>
    </reaction>
    <physiologicalReaction direction="left-to-right" evidence="1">
        <dbReference type="Rhea" id="RHEA:76160"/>
    </physiologicalReaction>
</comment>
<comment type="subcellular location">
    <subcellularLocation>
        <location evidence="1">Cell inner membrane</location>
        <topology evidence="2">Multi-pass membrane protein</topology>
    </subcellularLocation>
</comment>
<comment type="similarity">
    <text evidence="3">Belongs to the fluoride channel Fluc/FEX (TC 1.A.43) family.</text>
</comment>
<protein>
    <recommendedName>
        <fullName evidence="1">Fluoride-specific ion channel FluC</fullName>
    </recommendedName>
</protein>
<feature type="chain" id="PRO_1000026407" description="Fluoride-specific ion channel FluC">
    <location>
        <begin position="1"/>
        <end position="109"/>
    </location>
</feature>
<feature type="transmembrane region" description="Helical" evidence="2">
    <location>
        <begin position="21"/>
        <end position="41"/>
    </location>
</feature>
<feature type="transmembrane region" description="Helical" evidence="2">
    <location>
        <begin position="52"/>
        <end position="72"/>
    </location>
</feature>
<feature type="transmembrane region" description="Helical" evidence="2">
    <location>
        <begin position="83"/>
        <end position="103"/>
    </location>
</feature>
<evidence type="ECO:0000250" key="1">
    <source>
        <dbReference type="UniProtKB" id="P37002"/>
    </source>
</evidence>
<evidence type="ECO:0000255" key="2"/>
<evidence type="ECO:0000305" key="3"/>
<gene>
    <name evidence="1" type="primary">fluC</name>
    <name type="synonym">crcB</name>
    <name type="ordered locus">P9515_18201</name>
</gene>
<sequence>MNKIFFFKILLFAYLASFLRFFLNNNLLVGVIGSFVYGFVISRRVSKLKKEILLTGFCSCFTSFSGFVLFLYEISIQGYFLKLFFYLNIIIVLNLIIMYAGFLLGRKVT</sequence>
<reference key="1">
    <citation type="journal article" date="2007" name="PLoS Genet.">
        <title>Patterns and implications of gene gain and loss in the evolution of Prochlorococcus.</title>
        <authorList>
            <person name="Kettler G.C."/>
            <person name="Martiny A.C."/>
            <person name="Huang K."/>
            <person name="Zucker J."/>
            <person name="Coleman M.L."/>
            <person name="Rodrigue S."/>
            <person name="Chen F."/>
            <person name="Lapidus A."/>
            <person name="Ferriera S."/>
            <person name="Johnson J."/>
            <person name="Steglich C."/>
            <person name="Church G.M."/>
            <person name="Richardson P."/>
            <person name="Chisholm S.W."/>
        </authorList>
    </citation>
    <scope>NUCLEOTIDE SEQUENCE [LARGE SCALE GENOMIC DNA]</scope>
    <source>
        <strain>MIT 9515</strain>
    </source>
</reference>
<dbReference type="EMBL" id="CP000552">
    <property type="protein sequence ID" value="ABM73027.1"/>
    <property type="molecule type" value="Genomic_DNA"/>
</dbReference>
<dbReference type="RefSeq" id="WP_011821112.1">
    <property type="nucleotide sequence ID" value="NC_008817.1"/>
</dbReference>
<dbReference type="SMR" id="A2BZ16"/>
<dbReference type="STRING" id="167542.P9515_18201"/>
<dbReference type="GeneID" id="60200694"/>
<dbReference type="KEGG" id="pmc:P9515_18201"/>
<dbReference type="HOGENOM" id="CLU_2181556_0_0_3"/>
<dbReference type="Proteomes" id="UP000001589">
    <property type="component" value="Chromosome"/>
</dbReference>
<dbReference type="GO" id="GO:0005886">
    <property type="term" value="C:plasma membrane"/>
    <property type="evidence" value="ECO:0007669"/>
    <property type="project" value="UniProtKB-SubCell"/>
</dbReference>
<dbReference type="GO" id="GO:0034220">
    <property type="term" value="P:monoatomic ion transmembrane transport"/>
    <property type="evidence" value="ECO:0007669"/>
    <property type="project" value="UniProtKB-KW"/>
</dbReference>
<dbReference type="InterPro" id="IPR003691">
    <property type="entry name" value="FluC"/>
</dbReference>
<dbReference type="Pfam" id="PF02537">
    <property type="entry name" value="CRCB"/>
    <property type="match status" value="1"/>
</dbReference>
<keyword id="KW-0997">Cell inner membrane</keyword>
<keyword id="KW-1003">Cell membrane</keyword>
<keyword id="KW-0407">Ion channel</keyword>
<keyword id="KW-0406">Ion transport</keyword>
<keyword id="KW-0472">Membrane</keyword>
<keyword id="KW-0812">Transmembrane</keyword>
<keyword id="KW-1133">Transmembrane helix</keyword>
<keyword id="KW-0813">Transport</keyword>